<keyword id="KW-0963">Cytoplasm</keyword>
<keyword id="KW-0240">DNA-directed RNA polymerase</keyword>
<keyword id="KW-0479">Metal-binding</keyword>
<keyword id="KW-0548">Nucleotidyltransferase</keyword>
<keyword id="KW-0804">Transcription</keyword>
<keyword id="KW-0808">Transferase</keyword>
<keyword id="KW-0862">Zinc</keyword>
<accession>Q979K0</accession>
<organism>
    <name type="scientific">Thermoplasma volcanium (strain ATCC 51530 / DSM 4299 / JCM 9571 / NBRC 15438 / GSS1)</name>
    <dbReference type="NCBI Taxonomy" id="273116"/>
    <lineage>
        <taxon>Archaea</taxon>
        <taxon>Methanobacteriati</taxon>
        <taxon>Thermoplasmatota</taxon>
        <taxon>Thermoplasmata</taxon>
        <taxon>Thermoplasmatales</taxon>
        <taxon>Thermoplasmataceae</taxon>
        <taxon>Thermoplasma</taxon>
    </lineage>
</organism>
<protein>
    <recommendedName>
        <fullName evidence="1">DNA-directed RNA polymerase subunit Rpo10</fullName>
        <ecNumber evidence="1">2.7.7.6</ecNumber>
    </recommendedName>
    <alternativeName>
        <fullName evidence="1">DNA-directed RNA polymerase subunit N</fullName>
    </alternativeName>
</protein>
<reference key="1">
    <citation type="journal article" date="2000" name="Proc. Natl. Acad. Sci. U.S.A.">
        <title>Archaeal adaptation to higher temperatures revealed by genomic sequence of Thermoplasma volcanium.</title>
        <authorList>
            <person name="Kawashima T."/>
            <person name="Amano N."/>
            <person name="Koike H."/>
            <person name="Makino S."/>
            <person name="Higuchi S."/>
            <person name="Kawashima-Ohya Y."/>
            <person name="Watanabe K."/>
            <person name="Yamazaki M."/>
            <person name="Kanehori K."/>
            <person name="Kawamoto T."/>
            <person name="Nunoshiba T."/>
            <person name="Yamamoto Y."/>
            <person name="Aramaki H."/>
            <person name="Makino K."/>
            <person name="Suzuki M."/>
        </authorList>
    </citation>
    <scope>NUCLEOTIDE SEQUENCE [LARGE SCALE GENOMIC DNA]</scope>
    <source>
        <strain>ATCC 51530 / DSM 4299 / JCM 9571 / NBRC 15438 / GSS1</strain>
    </source>
</reference>
<evidence type="ECO:0000255" key="1">
    <source>
        <dbReference type="HAMAP-Rule" id="MF_00250"/>
    </source>
</evidence>
<feature type="chain" id="PRO_0000121365" description="DNA-directed RNA polymerase subunit Rpo10">
    <location>
        <begin position="1"/>
        <end position="72"/>
    </location>
</feature>
<feature type="binding site" evidence="1">
    <location>
        <position position="7"/>
    </location>
    <ligand>
        <name>Zn(2+)</name>
        <dbReference type="ChEBI" id="CHEBI:29105"/>
    </ligand>
</feature>
<feature type="binding site" evidence="1">
    <location>
        <position position="10"/>
    </location>
    <ligand>
        <name>Zn(2+)</name>
        <dbReference type="ChEBI" id="CHEBI:29105"/>
    </ligand>
</feature>
<feature type="binding site" evidence="1">
    <location>
        <position position="53"/>
    </location>
    <ligand>
        <name>Zn(2+)</name>
        <dbReference type="ChEBI" id="CHEBI:29105"/>
    </ligand>
</feature>
<feature type="binding site" evidence="1">
    <location>
        <position position="54"/>
    </location>
    <ligand>
        <name>Zn(2+)</name>
        <dbReference type="ChEBI" id="CHEBI:29105"/>
    </ligand>
</feature>
<sequence>MIIPVRCFSCGRVIASDYGRYLRRINEIRSEGREPTAEEIEKIFDDLGVERYCCRRMIISHVDLINEIMPFS</sequence>
<comment type="function">
    <text evidence="1">DNA-dependent RNA polymerase (RNAP) catalyzes the transcription of DNA into RNA using the four ribonucleoside triphosphates as substrates.</text>
</comment>
<comment type="catalytic activity">
    <reaction evidence="1">
        <text>RNA(n) + a ribonucleoside 5'-triphosphate = RNA(n+1) + diphosphate</text>
        <dbReference type="Rhea" id="RHEA:21248"/>
        <dbReference type="Rhea" id="RHEA-COMP:14527"/>
        <dbReference type="Rhea" id="RHEA-COMP:17342"/>
        <dbReference type="ChEBI" id="CHEBI:33019"/>
        <dbReference type="ChEBI" id="CHEBI:61557"/>
        <dbReference type="ChEBI" id="CHEBI:140395"/>
        <dbReference type="EC" id="2.7.7.6"/>
    </reaction>
</comment>
<comment type="cofactor">
    <cofactor evidence="1">
        <name>Zn(2+)</name>
        <dbReference type="ChEBI" id="CHEBI:29105"/>
    </cofactor>
    <text evidence="1">Binds 1 zinc ion.</text>
</comment>
<comment type="subunit">
    <text evidence="1">Part of the RNA polymerase complex.</text>
</comment>
<comment type="subcellular location">
    <subcellularLocation>
        <location evidence="1">Cytoplasm</location>
    </subcellularLocation>
</comment>
<comment type="similarity">
    <text evidence="1">Belongs to the archaeal Rpo10/eukaryotic RPB10 RNA polymerase subunit family.</text>
</comment>
<gene>
    <name evidence="1" type="primary">rpo10</name>
    <name evidence="1" type="synonym">rpoN</name>
    <name type="ordered locus">TV1161</name>
    <name type="ORF">TVG1188103</name>
</gene>
<name>RPO10_THEVO</name>
<proteinExistence type="inferred from homology"/>
<dbReference type="EC" id="2.7.7.6" evidence="1"/>
<dbReference type="EMBL" id="BA000011">
    <property type="protein sequence ID" value="BAB60303.1"/>
    <property type="molecule type" value="Genomic_DNA"/>
</dbReference>
<dbReference type="RefSeq" id="WP_010917395.1">
    <property type="nucleotide sequence ID" value="NC_002689.2"/>
</dbReference>
<dbReference type="SMR" id="Q979K0"/>
<dbReference type="STRING" id="273116.gene:9381961"/>
<dbReference type="PaxDb" id="273116-14325399"/>
<dbReference type="GeneID" id="1441277"/>
<dbReference type="KEGG" id="tvo:TVG1188103"/>
<dbReference type="eggNOG" id="arCOG04244">
    <property type="taxonomic scope" value="Archaea"/>
</dbReference>
<dbReference type="HOGENOM" id="CLU_143122_2_1_2"/>
<dbReference type="OrthoDB" id="371754at2157"/>
<dbReference type="PhylomeDB" id="Q979K0"/>
<dbReference type="Proteomes" id="UP000001017">
    <property type="component" value="Chromosome"/>
</dbReference>
<dbReference type="GO" id="GO:0005737">
    <property type="term" value="C:cytoplasm"/>
    <property type="evidence" value="ECO:0007669"/>
    <property type="project" value="UniProtKB-SubCell"/>
</dbReference>
<dbReference type="GO" id="GO:0000428">
    <property type="term" value="C:DNA-directed RNA polymerase complex"/>
    <property type="evidence" value="ECO:0007669"/>
    <property type="project" value="UniProtKB-KW"/>
</dbReference>
<dbReference type="GO" id="GO:0003677">
    <property type="term" value="F:DNA binding"/>
    <property type="evidence" value="ECO:0007669"/>
    <property type="project" value="InterPro"/>
</dbReference>
<dbReference type="GO" id="GO:0003899">
    <property type="term" value="F:DNA-directed RNA polymerase activity"/>
    <property type="evidence" value="ECO:0007669"/>
    <property type="project" value="UniProtKB-UniRule"/>
</dbReference>
<dbReference type="GO" id="GO:0008270">
    <property type="term" value="F:zinc ion binding"/>
    <property type="evidence" value="ECO:0007669"/>
    <property type="project" value="UniProtKB-UniRule"/>
</dbReference>
<dbReference type="GO" id="GO:0006351">
    <property type="term" value="P:DNA-templated transcription"/>
    <property type="evidence" value="ECO:0007669"/>
    <property type="project" value="UniProtKB-UniRule"/>
</dbReference>
<dbReference type="Gene3D" id="1.10.10.60">
    <property type="entry name" value="Homeodomain-like"/>
    <property type="match status" value="1"/>
</dbReference>
<dbReference type="HAMAP" id="MF_00250">
    <property type="entry name" value="RNApol_arch_Rpo10"/>
    <property type="match status" value="1"/>
</dbReference>
<dbReference type="InterPro" id="IPR023580">
    <property type="entry name" value="RNA_pol_su_RPB10"/>
</dbReference>
<dbReference type="InterPro" id="IPR020789">
    <property type="entry name" value="RNA_pol_suN_Zn-BS"/>
</dbReference>
<dbReference type="InterPro" id="IPR000268">
    <property type="entry name" value="RPABC5/Rpb10"/>
</dbReference>
<dbReference type="NCBIfam" id="NF003089">
    <property type="entry name" value="PRK04016.1"/>
    <property type="match status" value="1"/>
</dbReference>
<dbReference type="PANTHER" id="PTHR23431:SF3">
    <property type="entry name" value="DNA-DIRECTED RNA POLYMERASES I, II, AND III SUBUNIT RPABC5"/>
    <property type="match status" value="1"/>
</dbReference>
<dbReference type="PANTHER" id="PTHR23431">
    <property type="entry name" value="DNA-DIRECTED RNA POLYMERASES I, II, AND III SUBUNIT RPABC5 FAMILY MEMBER"/>
    <property type="match status" value="1"/>
</dbReference>
<dbReference type="Pfam" id="PF01194">
    <property type="entry name" value="RNA_pol_N"/>
    <property type="match status" value="1"/>
</dbReference>
<dbReference type="PIRSF" id="PIRSF005653">
    <property type="entry name" value="RNA_pol_N/8_sub"/>
    <property type="match status" value="1"/>
</dbReference>
<dbReference type="SUPFAM" id="SSF46924">
    <property type="entry name" value="RNA polymerase subunit RPB10"/>
    <property type="match status" value="1"/>
</dbReference>
<dbReference type="PROSITE" id="PS01112">
    <property type="entry name" value="RNA_POL_N_8KD"/>
    <property type="match status" value="1"/>
</dbReference>